<feature type="chain" id="PRO_0000357384" description="Enolase-phosphatase E1">
    <location>
        <begin position="1"/>
        <end position="235"/>
    </location>
</feature>
<evidence type="ECO:0000255" key="1">
    <source>
        <dbReference type="HAMAP-Rule" id="MF_01681"/>
    </source>
</evidence>
<keyword id="KW-0028">Amino-acid biosynthesis</keyword>
<keyword id="KW-0378">Hydrolase</keyword>
<keyword id="KW-0460">Magnesium</keyword>
<keyword id="KW-0479">Metal-binding</keyword>
<keyword id="KW-0486">Methionine biosynthesis</keyword>
<keyword id="KW-1185">Reference proteome</keyword>
<dbReference type="EC" id="3.1.3.77" evidence="1"/>
<dbReference type="EMBL" id="CP000774">
    <property type="protein sequence ID" value="ABS63471.1"/>
    <property type="molecule type" value="Genomic_DNA"/>
</dbReference>
<dbReference type="RefSeq" id="WP_012110764.1">
    <property type="nucleotide sequence ID" value="NC_009719.1"/>
</dbReference>
<dbReference type="SMR" id="A7HU88"/>
<dbReference type="STRING" id="402881.Plav_1854"/>
<dbReference type="KEGG" id="pla:Plav_1854"/>
<dbReference type="eggNOG" id="COG4229">
    <property type="taxonomic scope" value="Bacteria"/>
</dbReference>
<dbReference type="HOGENOM" id="CLU_023273_0_0_5"/>
<dbReference type="OrthoDB" id="9797416at2"/>
<dbReference type="UniPathway" id="UPA00904">
    <property type="reaction ID" value="UER00876"/>
</dbReference>
<dbReference type="UniPathway" id="UPA00904">
    <property type="reaction ID" value="UER00877"/>
</dbReference>
<dbReference type="Proteomes" id="UP000006377">
    <property type="component" value="Chromosome"/>
</dbReference>
<dbReference type="GO" id="GO:0043715">
    <property type="term" value="F:2,3-diketo-5-methylthiopentyl-1-phosphate enolase activity"/>
    <property type="evidence" value="ECO:0007669"/>
    <property type="project" value="UniProtKB-UniRule"/>
</dbReference>
<dbReference type="GO" id="GO:0043716">
    <property type="term" value="F:2-hydroxy-3-keto-5-methylthiopentenyl-1-phosphate phosphatase activity"/>
    <property type="evidence" value="ECO:0007669"/>
    <property type="project" value="UniProtKB-UniRule"/>
</dbReference>
<dbReference type="GO" id="GO:0043874">
    <property type="term" value="F:acireductone synthase activity"/>
    <property type="evidence" value="ECO:0007669"/>
    <property type="project" value="UniProtKB-EC"/>
</dbReference>
<dbReference type="GO" id="GO:0000287">
    <property type="term" value="F:magnesium ion binding"/>
    <property type="evidence" value="ECO:0007669"/>
    <property type="project" value="UniProtKB-UniRule"/>
</dbReference>
<dbReference type="GO" id="GO:0019509">
    <property type="term" value="P:L-methionine salvage from methylthioadenosine"/>
    <property type="evidence" value="ECO:0007669"/>
    <property type="project" value="UniProtKB-UniRule"/>
</dbReference>
<dbReference type="CDD" id="cd01629">
    <property type="entry name" value="HAD_EP"/>
    <property type="match status" value="1"/>
</dbReference>
<dbReference type="Gene3D" id="1.10.720.60">
    <property type="match status" value="1"/>
</dbReference>
<dbReference type="Gene3D" id="3.40.50.1000">
    <property type="entry name" value="HAD superfamily/HAD-like"/>
    <property type="match status" value="1"/>
</dbReference>
<dbReference type="HAMAP" id="MF_01681">
    <property type="entry name" value="Salvage_MtnC"/>
    <property type="match status" value="1"/>
</dbReference>
<dbReference type="InterPro" id="IPR023943">
    <property type="entry name" value="Enolase-ppase_E1"/>
</dbReference>
<dbReference type="InterPro" id="IPR036412">
    <property type="entry name" value="HAD-like_sf"/>
</dbReference>
<dbReference type="InterPro" id="IPR006439">
    <property type="entry name" value="HAD-SF_hydro_IA"/>
</dbReference>
<dbReference type="InterPro" id="IPR023214">
    <property type="entry name" value="HAD_sf"/>
</dbReference>
<dbReference type="NCBIfam" id="TIGR01691">
    <property type="entry name" value="enolase-ppase"/>
    <property type="match status" value="1"/>
</dbReference>
<dbReference type="NCBIfam" id="TIGR01549">
    <property type="entry name" value="HAD-SF-IA-v1"/>
    <property type="match status" value="1"/>
</dbReference>
<dbReference type="PANTHER" id="PTHR20371">
    <property type="entry name" value="ENOLASE-PHOSPHATASE E1"/>
    <property type="match status" value="1"/>
</dbReference>
<dbReference type="PANTHER" id="PTHR20371:SF1">
    <property type="entry name" value="ENOLASE-PHOSPHATASE E1"/>
    <property type="match status" value="1"/>
</dbReference>
<dbReference type="Pfam" id="PF00702">
    <property type="entry name" value="Hydrolase"/>
    <property type="match status" value="1"/>
</dbReference>
<dbReference type="SFLD" id="SFLDG01129">
    <property type="entry name" value="C1.5:_HAD__Beta-PGM__Phosphata"/>
    <property type="match status" value="1"/>
</dbReference>
<dbReference type="SFLD" id="SFLDF00044">
    <property type="entry name" value="enolase-phosphatase"/>
    <property type="match status" value="1"/>
</dbReference>
<dbReference type="SUPFAM" id="SSF56784">
    <property type="entry name" value="HAD-like"/>
    <property type="match status" value="1"/>
</dbReference>
<proteinExistence type="inferred from homology"/>
<protein>
    <recommendedName>
        <fullName evidence="1">Enolase-phosphatase E1</fullName>
        <ecNumber evidence="1">3.1.3.77</ecNumber>
    </recommendedName>
    <alternativeName>
        <fullName evidence="1">2,3-diketo-5-methylthio-1-phosphopentane phosphatase</fullName>
    </alternativeName>
</protein>
<accession>A7HU88</accession>
<sequence length="235" mass="25065">MTAVRAVVTDIEGTTTPLAFVHEVLFPYARARLADFVAANADDEEVAAALGDARELGGIAGAGDAETLQLLLAWMDEDRKAGPLKLLQGLIWRHGYEEGVLKGEIYADAAAALRLWHGRGLRLFVYSSGSEAAQRLIFGHSDQGDLGPCFEGYFDTRIGAKVDSASYAAIAQSAGLPTREVLFLSDHEGEIKAAREAGMQAVTIDRTLQEEAWMEGPKAGSFSAVERALAPGKSA</sequence>
<organism>
    <name type="scientific">Parvibaculum lavamentivorans (strain DS-1 / DSM 13023 / NCIMB 13966)</name>
    <dbReference type="NCBI Taxonomy" id="402881"/>
    <lineage>
        <taxon>Bacteria</taxon>
        <taxon>Pseudomonadati</taxon>
        <taxon>Pseudomonadota</taxon>
        <taxon>Alphaproteobacteria</taxon>
        <taxon>Hyphomicrobiales</taxon>
        <taxon>Parvibaculaceae</taxon>
        <taxon>Parvibaculum</taxon>
    </lineage>
</organism>
<comment type="function">
    <text evidence="1">Bifunctional enzyme that catalyzes the enolization of 2,3-diketo-5-methylthiopentyl-1-phosphate (DK-MTP-1-P) into the intermediate 2-hydroxy-3-keto-5-methylthiopentenyl-1-phosphate (HK-MTPenyl-1-P), which is then dephosphorylated to form the acireductone 1,2-dihydroxy-3-keto-5-methylthiopentene (DHK-MTPene).</text>
</comment>
<comment type="catalytic activity">
    <reaction evidence="1">
        <text>5-methylsulfanyl-2,3-dioxopentyl phosphate + H2O = 1,2-dihydroxy-5-(methylsulfanyl)pent-1-en-3-one + phosphate</text>
        <dbReference type="Rhea" id="RHEA:21700"/>
        <dbReference type="ChEBI" id="CHEBI:15377"/>
        <dbReference type="ChEBI" id="CHEBI:43474"/>
        <dbReference type="ChEBI" id="CHEBI:49252"/>
        <dbReference type="ChEBI" id="CHEBI:58828"/>
        <dbReference type="EC" id="3.1.3.77"/>
    </reaction>
</comment>
<comment type="cofactor">
    <cofactor evidence="1">
        <name>Mg(2+)</name>
        <dbReference type="ChEBI" id="CHEBI:18420"/>
    </cofactor>
    <text evidence="1">Binds 1 Mg(2+) ion per subunit.</text>
</comment>
<comment type="pathway">
    <text evidence="1">Amino-acid biosynthesis; L-methionine biosynthesis via salvage pathway; L-methionine from S-methyl-5-thio-alpha-D-ribose 1-phosphate: step 3/6.</text>
</comment>
<comment type="pathway">
    <text evidence="1">Amino-acid biosynthesis; L-methionine biosynthesis via salvage pathway; L-methionine from S-methyl-5-thio-alpha-D-ribose 1-phosphate: step 4/6.</text>
</comment>
<comment type="subunit">
    <text evidence="1">Monomer.</text>
</comment>
<comment type="similarity">
    <text evidence="1">Belongs to the HAD-like hydrolase superfamily. MasA/MtnC family.</text>
</comment>
<reference key="1">
    <citation type="journal article" date="2011" name="Stand. Genomic Sci.">
        <title>Complete genome sequence of Parvibaculum lavamentivorans type strain (DS-1(T)).</title>
        <authorList>
            <person name="Schleheck D."/>
            <person name="Weiss M."/>
            <person name="Pitluck S."/>
            <person name="Bruce D."/>
            <person name="Land M.L."/>
            <person name="Han S."/>
            <person name="Saunders E."/>
            <person name="Tapia R."/>
            <person name="Detter C."/>
            <person name="Brettin T."/>
            <person name="Han J."/>
            <person name="Woyke T."/>
            <person name="Goodwin L."/>
            <person name="Pennacchio L."/>
            <person name="Nolan M."/>
            <person name="Cook A.M."/>
            <person name="Kjelleberg S."/>
            <person name="Thomas T."/>
        </authorList>
    </citation>
    <scope>NUCLEOTIDE SEQUENCE [LARGE SCALE GENOMIC DNA]</scope>
    <source>
        <strain>DS-1 / DSM 13023 / NCIMB 13966</strain>
    </source>
</reference>
<name>MTNC_PARL1</name>
<gene>
    <name evidence="1" type="primary">mtnC</name>
    <name type="ordered locus">Plav_1854</name>
</gene>